<reference key="1">
    <citation type="journal article" date="1993" name="Chromosoma">
        <title>Characterization and sequencing of the sex determining region Y gene (Sry) in Akodon (Cricetidae) species with sex reversed females.</title>
        <authorList>
            <person name="Bianchi N.O."/>
            <person name="Bianchi M.S."/>
            <person name="Bailliet G."/>
            <person name="de la Chapelle A."/>
        </authorList>
    </citation>
    <scope>NUCLEOTIDE SEQUENCE [GENOMIC DNA]</scope>
    <source>
        <tissue>Liver</tissue>
    </source>
</reference>
<evidence type="ECO:0000250" key="1">
    <source>
        <dbReference type="UniProtKB" id="P36394"/>
    </source>
</evidence>
<evidence type="ECO:0000250" key="2">
    <source>
        <dbReference type="UniProtKB" id="Q05066"/>
    </source>
</evidence>
<evidence type="ECO:0000255" key="3">
    <source>
        <dbReference type="PROSITE-ProRule" id="PRU00267"/>
    </source>
</evidence>
<evidence type="ECO:0000305" key="4"/>
<gene>
    <name type="primary">SRY</name>
    <name type="synonym">TDF</name>
</gene>
<sequence>MVWSRGQRRKLALENPSMQNSEISEQLGCQWKSLREADKRPFLEEAQRLKIL</sequence>
<protein>
    <recommendedName>
        <fullName>Sex-determining region Y protein</fullName>
    </recommendedName>
    <alternativeName>
        <fullName>Testis-determining factor</fullName>
    </alternativeName>
</protein>
<organism>
    <name type="scientific">Akodon azarae</name>
    <name type="common">Azara's grass mouse</name>
    <dbReference type="NCBI Taxonomy" id="29095"/>
    <lineage>
        <taxon>Eukaryota</taxon>
        <taxon>Metazoa</taxon>
        <taxon>Chordata</taxon>
        <taxon>Craniata</taxon>
        <taxon>Vertebrata</taxon>
        <taxon>Euteleostomi</taxon>
        <taxon>Mammalia</taxon>
        <taxon>Eutheria</taxon>
        <taxon>Euarchontoglires</taxon>
        <taxon>Glires</taxon>
        <taxon>Rodentia</taxon>
        <taxon>Myomorpha</taxon>
        <taxon>Muroidea</taxon>
        <taxon>Cricetidae</taxon>
        <taxon>Sigmodontinae</taxon>
        <taxon>Akodon</taxon>
    </lineage>
</organism>
<proteinExistence type="inferred from homology"/>
<accession>P36388</accession>
<keyword id="KW-0010">Activator</keyword>
<keyword id="KW-0112">Calmodulin-binding</keyword>
<keyword id="KW-0963">Cytoplasm</keyword>
<keyword id="KW-0221">Differentiation</keyword>
<keyword id="KW-0238">DNA-binding</keyword>
<keyword id="KW-0539">Nucleus</keyword>
<keyword id="KW-0678">Repressor</keyword>
<keyword id="KW-0726">Sexual differentiation</keyword>
<keyword id="KW-0804">Transcription</keyword>
<keyword id="KW-0805">Transcription regulation</keyword>
<dbReference type="EMBL" id="X74082">
    <property type="protein sequence ID" value="CAB37650.1"/>
    <property type="molecule type" value="Genomic_DNA"/>
</dbReference>
<dbReference type="SMR" id="P36388"/>
<dbReference type="GO" id="GO:0005737">
    <property type="term" value="C:cytoplasm"/>
    <property type="evidence" value="ECO:0007669"/>
    <property type="project" value="UniProtKB-SubCell"/>
</dbReference>
<dbReference type="GO" id="GO:0016607">
    <property type="term" value="C:nuclear speck"/>
    <property type="evidence" value="ECO:0007669"/>
    <property type="project" value="UniProtKB-SubCell"/>
</dbReference>
<dbReference type="GO" id="GO:0005634">
    <property type="term" value="C:nucleus"/>
    <property type="evidence" value="ECO:0000250"/>
    <property type="project" value="UniProtKB"/>
</dbReference>
<dbReference type="GO" id="GO:0005516">
    <property type="term" value="F:calmodulin binding"/>
    <property type="evidence" value="ECO:0007669"/>
    <property type="project" value="UniProtKB-KW"/>
</dbReference>
<dbReference type="GO" id="GO:0001228">
    <property type="term" value="F:DNA-binding transcription activator activity, RNA polymerase II-specific"/>
    <property type="evidence" value="ECO:0007669"/>
    <property type="project" value="TreeGrafter"/>
</dbReference>
<dbReference type="GO" id="GO:0000978">
    <property type="term" value="F:RNA polymerase II cis-regulatory region sequence-specific DNA binding"/>
    <property type="evidence" value="ECO:0007669"/>
    <property type="project" value="TreeGrafter"/>
</dbReference>
<dbReference type="GO" id="GO:0030154">
    <property type="term" value="P:cell differentiation"/>
    <property type="evidence" value="ECO:0007669"/>
    <property type="project" value="UniProtKB-KW"/>
</dbReference>
<dbReference type="GO" id="GO:0007548">
    <property type="term" value="P:sex differentiation"/>
    <property type="evidence" value="ECO:0007669"/>
    <property type="project" value="UniProtKB-KW"/>
</dbReference>
<dbReference type="Gene3D" id="1.10.30.10">
    <property type="entry name" value="High mobility group box domain"/>
    <property type="match status" value="1"/>
</dbReference>
<dbReference type="InterPro" id="IPR009071">
    <property type="entry name" value="HMG_box_dom"/>
</dbReference>
<dbReference type="InterPro" id="IPR036910">
    <property type="entry name" value="HMG_box_dom_sf"/>
</dbReference>
<dbReference type="InterPro" id="IPR050140">
    <property type="entry name" value="SRY-related_HMG-box_TF-like"/>
</dbReference>
<dbReference type="PANTHER" id="PTHR10270:SF161">
    <property type="entry name" value="SEX-DETERMINING REGION Y PROTEIN"/>
    <property type="match status" value="1"/>
</dbReference>
<dbReference type="PANTHER" id="PTHR10270">
    <property type="entry name" value="SOX TRANSCRIPTION FACTOR"/>
    <property type="match status" value="1"/>
</dbReference>
<dbReference type="Pfam" id="PF00505">
    <property type="entry name" value="HMG_box"/>
    <property type="match status" value="1"/>
</dbReference>
<dbReference type="SUPFAM" id="SSF47095">
    <property type="entry name" value="HMG-box"/>
    <property type="match status" value="1"/>
</dbReference>
<dbReference type="PROSITE" id="PS50118">
    <property type="entry name" value="HMG_BOX_2"/>
    <property type="match status" value="1"/>
</dbReference>
<comment type="function">
    <text evidence="1 2">Transcriptional regulator that controls a genetic switch in male development. It is necessary and sufficient for initiating male sex determination by directing the development of supporting cell precursors (pre-Sertoli cells) as Sertoli rather than granulosa cells. Involved in different aspects of gene regulation including promoter activation or repression. Binds to the DNA consensus sequence 5'-[AT]AACAA[AT]-3'. SRY HMG box recognizes DNA by partial intercalation in the minor groove and promotes DNA bending. Also involved in pre-mRNA splicing (By similarity). In male adult brain involved in the maintenance of motor functions of dopaminergic neurons (By similarity).</text>
</comment>
<comment type="subunit">
    <text evidence="2">Interacts with CALM, EP300, HDAC3, KPNB1, ZNF208 isoform KRAB-O, PARP1, SLC9A3R2 and WT1. The interaction with EP300 modulates its DNA-binding activity. The interaction with KPNB1 is sensitive to dissociation by Ran in the GTP-bound form. Interaction with PARP1 impaired its DNA-binding activity.</text>
</comment>
<comment type="subcellular location">
    <subcellularLocation>
        <location evidence="2">Nucleus speckle</location>
    </subcellularLocation>
    <subcellularLocation>
        <location evidence="2">Cytoplasm</location>
    </subcellularLocation>
    <subcellularLocation>
        <location evidence="2">Nucleus</location>
    </subcellularLocation>
</comment>
<comment type="similarity">
    <text evidence="4">Belongs to the SRY family.</text>
</comment>
<comment type="online information" name="Protein Spotlight">
    <link uri="https://www.proteinspotlight.org/back_issues/080"/>
    <text>The tenuous nature of sex - Issue 80 of March 2007</text>
</comment>
<name>SRY_AKOAZ</name>
<feature type="chain" id="PRO_0000048630" description="Sex-determining region Y protein">
    <location>
        <begin position="1" status="less than"/>
        <end position="52" status="greater than"/>
    </location>
</feature>
<feature type="DNA-binding region" description="HMG box" evidence="3">
    <location>
        <begin position="1" status="less than"/>
        <end position="52" status="greater than"/>
    </location>
</feature>
<feature type="non-terminal residue">
    <location>
        <position position="1"/>
    </location>
</feature>
<feature type="non-terminal residue">
    <location>
        <position position="52"/>
    </location>
</feature>